<reference key="1">
    <citation type="journal article" date="2009" name="PLoS Genet.">
        <title>Organised genome dynamics in the Escherichia coli species results in highly diverse adaptive paths.</title>
        <authorList>
            <person name="Touchon M."/>
            <person name="Hoede C."/>
            <person name="Tenaillon O."/>
            <person name="Barbe V."/>
            <person name="Baeriswyl S."/>
            <person name="Bidet P."/>
            <person name="Bingen E."/>
            <person name="Bonacorsi S."/>
            <person name="Bouchier C."/>
            <person name="Bouvet O."/>
            <person name="Calteau A."/>
            <person name="Chiapello H."/>
            <person name="Clermont O."/>
            <person name="Cruveiller S."/>
            <person name="Danchin A."/>
            <person name="Diard M."/>
            <person name="Dossat C."/>
            <person name="Karoui M.E."/>
            <person name="Frapy E."/>
            <person name="Garry L."/>
            <person name="Ghigo J.M."/>
            <person name="Gilles A.M."/>
            <person name="Johnson J."/>
            <person name="Le Bouguenec C."/>
            <person name="Lescat M."/>
            <person name="Mangenot S."/>
            <person name="Martinez-Jehanne V."/>
            <person name="Matic I."/>
            <person name="Nassif X."/>
            <person name="Oztas S."/>
            <person name="Petit M.A."/>
            <person name="Pichon C."/>
            <person name="Rouy Z."/>
            <person name="Ruf C.S."/>
            <person name="Schneider D."/>
            <person name="Tourret J."/>
            <person name="Vacherie B."/>
            <person name="Vallenet D."/>
            <person name="Medigue C."/>
            <person name="Rocha E.P.C."/>
            <person name="Denamur E."/>
        </authorList>
    </citation>
    <scope>NUCLEOTIDE SEQUENCE [LARGE SCALE GENOMIC DNA]</scope>
    <source>
        <strain>UMN026 / ExPEC</strain>
    </source>
</reference>
<accession>B7N4K1</accession>
<organism>
    <name type="scientific">Escherichia coli O17:K52:H18 (strain UMN026 / ExPEC)</name>
    <dbReference type="NCBI Taxonomy" id="585056"/>
    <lineage>
        <taxon>Bacteria</taxon>
        <taxon>Pseudomonadati</taxon>
        <taxon>Pseudomonadota</taxon>
        <taxon>Gammaproteobacteria</taxon>
        <taxon>Enterobacterales</taxon>
        <taxon>Enterobacteriaceae</taxon>
        <taxon>Escherichia</taxon>
    </lineage>
</organism>
<sequence>MQHKLLINGELVSGEGEKQPVYNPATGEVLLEIAEASAEQVDAAVRAADAAFAEWGQTTPKARAECLLKLADVIEENGQVFAELESRNCGKPLHSAFNDEIPAIVDVFRFFAGAARCLNGLAAGEYLEGHTSMIRRDPLGVVASIAPWNYPLMMAAWKLAPALAAGNCVVLKPSEITPLTALKLAELAKDIFPAGVINVLFGRGKTVGDPLTGHPKVRMVSLTGSIATGEHIISHTAPSIKLTHMELGGKAPVIVFDDADIEAVVEGVRTFGYYNAGQDCTAACRIYAQKGIYDTLVEKLGAAVATLKSGAPDDESTELGPLSSLAHLDRVSKAVEEAKATGHIKVITGGEKRKGNGYYYAPTLLAGALQDDAIVQKEVFGPVVSVTLFDNEEQVVNWANDSQYGLASSVWTKDVGRAHRVSARLQYGCTWVNTHFMLVSEMPHGGQKLSGYGKDMSLYGLEDYTVVRHVMVKH</sequence>
<comment type="function">
    <text evidence="1">Catalyzes the oxidation 4-aminobutanal (gamma-aminobutyraldehyde) to 4-aminobutanoate (gamma-aminobutyrate or GABA). This is the second step in one of two pathways for putrescine degradation, where putrescine is converted into 4-aminobutanoate via 4-aminobutanal. Also functions as a 5-aminopentanal dehydrogenase in a a L-lysine degradation pathway to succinate that proceeds via cadaverine, glutarate and L-2-hydroxyglutarate.</text>
</comment>
<comment type="catalytic activity">
    <reaction evidence="1">
        <text>4-aminobutanal + NAD(+) + H2O = 4-aminobutanoate + NADH + 2 H(+)</text>
        <dbReference type="Rhea" id="RHEA:19105"/>
        <dbReference type="ChEBI" id="CHEBI:15377"/>
        <dbReference type="ChEBI" id="CHEBI:15378"/>
        <dbReference type="ChEBI" id="CHEBI:57540"/>
        <dbReference type="ChEBI" id="CHEBI:57945"/>
        <dbReference type="ChEBI" id="CHEBI:58264"/>
        <dbReference type="ChEBI" id="CHEBI:59888"/>
        <dbReference type="EC" id="1.2.1.19"/>
    </reaction>
    <physiologicalReaction direction="left-to-right" evidence="1">
        <dbReference type="Rhea" id="RHEA:19106"/>
    </physiologicalReaction>
</comment>
<comment type="catalytic activity">
    <reaction evidence="1">
        <text>5-aminopentanal + NAD(+) + H2O = 5-aminopentanoate + NADH + 2 H(+)</text>
        <dbReference type="Rhea" id="RHEA:61632"/>
        <dbReference type="ChEBI" id="CHEBI:15377"/>
        <dbReference type="ChEBI" id="CHEBI:15378"/>
        <dbReference type="ChEBI" id="CHEBI:57540"/>
        <dbReference type="ChEBI" id="CHEBI:57945"/>
        <dbReference type="ChEBI" id="CHEBI:144896"/>
        <dbReference type="ChEBI" id="CHEBI:356010"/>
    </reaction>
    <physiologicalReaction direction="left-to-right" evidence="1">
        <dbReference type="Rhea" id="RHEA:61633"/>
    </physiologicalReaction>
</comment>
<comment type="pathway">
    <text evidence="1">Amine and polyamine degradation; putrescine degradation; 4-aminobutanoate from 4-aminobutanal: step 1/1.</text>
</comment>
<comment type="pathway">
    <text evidence="1">Amino-acid degradation.</text>
</comment>
<comment type="subunit">
    <text evidence="1">Homotetramer.</text>
</comment>
<comment type="miscellaneous">
    <text evidence="1">4-aminobutanal can spontaneously cyclize to 1-pyrroline, and 5-aminopentanal to 1-piperideine.</text>
</comment>
<comment type="similarity">
    <text evidence="1">Belongs to the aldehyde dehydrogenase family. Gamma-aminobutyraldehyde dehydrogenase subfamily.</text>
</comment>
<feature type="chain" id="PRO_1000140272" description="Gamma-aminobutyraldehyde dehydrogenase">
    <location>
        <begin position="1"/>
        <end position="474"/>
    </location>
</feature>
<feature type="active site" evidence="1">
    <location>
        <position position="246"/>
    </location>
</feature>
<feature type="active site" description="Nucleophile" evidence="1">
    <location>
        <position position="280"/>
    </location>
</feature>
<feature type="binding site" evidence="1">
    <location>
        <begin position="146"/>
        <end position="148"/>
    </location>
    <ligand>
        <name>NAD(+)</name>
        <dbReference type="ChEBI" id="CHEBI:57540"/>
    </ligand>
</feature>
<feature type="binding site" evidence="1">
    <location>
        <begin position="172"/>
        <end position="175"/>
    </location>
    <ligand>
        <name>NAD(+)</name>
        <dbReference type="ChEBI" id="CHEBI:57540"/>
    </ligand>
</feature>
<feature type="binding site" evidence="1">
    <location>
        <position position="209"/>
    </location>
    <ligand>
        <name>NAD(+)</name>
        <dbReference type="ChEBI" id="CHEBI:57540"/>
    </ligand>
</feature>
<feature type="binding site" evidence="1">
    <location>
        <begin position="225"/>
        <end position="228"/>
    </location>
    <ligand>
        <name>NAD(+)</name>
        <dbReference type="ChEBI" id="CHEBI:57540"/>
    </ligand>
</feature>
<feature type="binding site" evidence="1">
    <location>
        <position position="280"/>
    </location>
    <ligand>
        <name>NAD(+)</name>
        <dbReference type="ChEBI" id="CHEBI:57540"/>
    </ligand>
</feature>
<keyword id="KW-0520">NAD</keyword>
<keyword id="KW-0560">Oxidoreductase</keyword>
<evidence type="ECO:0000255" key="1">
    <source>
        <dbReference type="HAMAP-Rule" id="MF_01275"/>
    </source>
</evidence>
<gene>
    <name evidence="1" type="primary">patD</name>
    <name type="ordered locus">ECUMN_1692</name>
</gene>
<dbReference type="EC" id="1.2.1.19" evidence="1"/>
<dbReference type="EC" id="1.2.1.-" evidence="1"/>
<dbReference type="EMBL" id="CU928163">
    <property type="protein sequence ID" value="CAR12894.1"/>
    <property type="molecule type" value="Genomic_DNA"/>
</dbReference>
<dbReference type="RefSeq" id="WP_001163915.1">
    <property type="nucleotide sequence ID" value="NC_011751.1"/>
</dbReference>
<dbReference type="RefSeq" id="YP_002412431.1">
    <property type="nucleotide sequence ID" value="NC_011751.1"/>
</dbReference>
<dbReference type="SMR" id="B7N4K1"/>
<dbReference type="STRING" id="585056.ECUMN_1692"/>
<dbReference type="KEGG" id="eum:ECUMN_1692"/>
<dbReference type="PATRIC" id="fig|585056.7.peg.1883"/>
<dbReference type="HOGENOM" id="CLU_005391_1_0_6"/>
<dbReference type="UniPathway" id="UPA00188">
    <property type="reaction ID" value="UER00292"/>
</dbReference>
<dbReference type="Proteomes" id="UP000007097">
    <property type="component" value="Chromosome"/>
</dbReference>
<dbReference type="GO" id="GO:0019145">
    <property type="term" value="F:aminobutyraldehyde dehydrogenase (NAD+) activity"/>
    <property type="evidence" value="ECO:0007669"/>
    <property type="project" value="UniProtKB-UniRule"/>
</dbReference>
<dbReference type="GO" id="GO:0051287">
    <property type="term" value="F:NAD binding"/>
    <property type="evidence" value="ECO:0007669"/>
    <property type="project" value="UniProtKB-UniRule"/>
</dbReference>
<dbReference type="GO" id="GO:0019477">
    <property type="term" value="P:L-lysine catabolic process"/>
    <property type="evidence" value="ECO:0007669"/>
    <property type="project" value="UniProtKB-UniRule"/>
</dbReference>
<dbReference type="GO" id="GO:0009447">
    <property type="term" value="P:putrescine catabolic process"/>
    <property type="evidence" value="ECO:0007669"/>
    <property type="project" value="UniProtKB-UniRule"/>
</dbReference>
<dbReference type="CDD" id="cd07092">
    <property type="entry name" value="ALDH_ABALDH-YdcW"/>
    <property type="match status" value="1"/>
</dbReference>
<dbReference type="FunFam" id="3.40.605.10:FF:000001">
    <property type="entry name" value="Aldehyde dehydrogenase 1"/>
    <property type="match status" value="1"/>
</dbReference>
<dbReference type="FunFam" id="3.40.309.10:FF:000010">
    <property type="entry name" value="Gamma-aminobutyraldehyde dehydrogenase"/>
    <property type="match status" value="1"/>
</dbReference>
<dbReference type="Gene3D" id="3.40.605.10">
    <property type="entry name" value="Aldehyde Dehydrogenase, Chain A, domain 1"/>
    <property type="match status" value="1"/>
</dbReference>
<dbReference type="Gene3D" id="3.40.309.10">
    <property type="entry name" value="Aldehyde Dehydrogenase, Chain A, domain 2"/>
    <property type="match status" value="1"/>
</dbReference>
<dbReference type="HAMAP" id="MF_01275">
    <property type="entry name" value="Aldedh_Prr"/>
    <property type="match status" value="1"/>
</dbReference>
<dbReference type="InterPro" id="IPR016161">
    <property type="entry name" value="Ald_DH/histidinol_DH"/>
</dbReference>
<dbReference type="InterPro" id="IPR016163">
    <property type="entry name" value="Ald_DH_C"/>
</dbReference>
<dbReference type="InterPro" id="IPR029510">
    <property type="entry name" value="Ald_DH_CS_GLU"/>
</dbReference>
<dbReference type="InterPro" id="IPR016162">
    <property type="entry name" value="Ald_DH_N"/>
</dbReference>
<dbReference type="InterPro" id="IPR015590">
    <property type="entry name" value="Aldehyde_DH_dom"/>
</dbReference>
<dbReference type="InterPro" id="IPR015657">
    <property type="entry name" value="Aminobutyraldehyde_DH"/>
</dbReference>
<dbReference type="InterPro" id="IPR017749">
    <property type="entry name" value="PatD"/>
</dbReference>
<dbReference type="NCBIfam" id="TIGR03374">
    <property type="entry name" value="ABALDH"/>
    <property type="match status" value="1"/>
</dbReference>
<dbReference type="NCBIfam" id="NF010000">
    <property type="entry name" value="PRK13473.1"/>
    <property type="match status" value="1"/>
</dbReference>
<dbReference type="PANTHER" id="PTHR11699">
    <property type="entry name" value="ALDEHYDE DEHYDROGENASE-RELATED"/>
    <property type="match status" value="1"/>
</dbReference>
<dbReference type="Pfam" id="PF00171">
    <property type="entry name" value="Aldedh"/>
    <property type="match status" value="1"/>
</dbReference>
<dbReference type="SUPFAM" id="SSF53720">
    <property type="entry name" value="ALDH-like"/>
    <property type="match status" value="1"/>
</dbReference>
<dbReference type="PROSITE" id="PS00687">
    <property type="entry name" value="ALDEHYDE_DEHYDR_GLU"/>
    <property type="match status" value="1"/>
</dbReference>
<name>ABDH_ECOLU</name>
<proteinExistence type="inferred from homology"/>
<protein>
    <recommendedName>
        <fullName evidence="1">Gamma-aminobutyraldehyde dehydrogenase</fullName>
        <shortName evidence="1">ABALDH</shortName>
        <ecNumber evidence="1">1.2.1.19</ecNumber>
    </recommendedName>
    <alternativeName>
        <fullName evidence="1">1-pyrroline dehydrogenase</fullName>
    </alternativeName>
    <alternativeName>
        <fullName evidence="1">4-aminobutanal dehydrogenase</fullName>
    </alternativeName>
    <alternativeName>
        <fullName evidence="1">5-aminopentanal dehydrogenase</fullName>
        <ecNumber evidence="1">1.2.1.-</ecNumber>
    </alternativeName>
</protein>